<name>VP7_ROTPG</name>
<reference key="1">
    <citation type="journal article" date="1988" name="Nucleic Acids Res.">
        <title>Gene sequence of the VP7 serotype specific glycoprotein of Gottfried porcine rotavirus.</title>
        <authorList>
            <person name="Gorziglia M."/>
            <person name="Nishikawa K."/>
            <person name="Green K.Y."/>
            <person name="Taniguchi K."/>
        </authorList>
    </citation>
    <scope>NUCLEOTIDE SEQUENCE [GENOMIC RNA]</scope>
</reference>
<feature type="signal peptide" evidence="2">
    <location>
        <begin position="1"/>
        <end position="50"/>
    </location>
</feature>
<feature type="chain" id="PRO_0000149613" description="Outer capsid glycoprotein VP7" evidence="2">
    <location>
        <begin position="51"/>
        <end position="326"/>
    </location>
</feature>
<feature type="region of interest" description="CNP motif; interaction with ITGAV/ITGB3" evidence="2">
    <location>
        <begin position="165"/>
        <end position="167"/>
    </location>
</feature>
<feature type="region of interest" description="LVD motif; interaction with ITGA4/ITGB1 heterodimer" evidence="2">
    <location>
        <begin position="237"/>
        <end position="239"/>
    </location>
</feature>
<feature type="region of interest" description="GPR motif; interaction with ITGAX/ITGB2" evidence="2">
    <location>
        <begin position="253"/>
        <end position="255"/>
    </location>
</feature>
<feature type="binding site" evidence="2">
    <location>
        <position position="95"/>
    </location>
    <ligand>
        <name>Ca(2+)</name>
        <dbReference type="ChEBI" id="CHEBI:29108"/>
        <label>1</label>
    </ligand>
</feature>
<feature type="binding site" evidence="2">
    <location>
        <position position="177"/>
    </location>
    <ligand>
        <name>Ca(2+)</name>
        <dbReference type="ChEBI" id="CHEBI:29108"/>
        <label>2</label>
    </ligand>
</feature>
<feature type="binding site" evidence="2">
    <location>
        <position position="206"/>
    </location>
    <ligand>
        <name>Ca(2+)</name>
        <dbReference type="ChEBI" id="CHEBI:29108"/>
        <label>1</label>
    </ligand>
</feature>
<feature type="binding site" evidence="2">
    <location>
        <position position="214"/>
    </location>
    <ligand>
        <name>Ca(2+)</name>
        <dbReference type="ChEBI" id="CHEBI:29108"/>
        <label>1</label>
    </ligand>
</feature>
<feature type="binding site" evidence="2">
    <location>
        <position position="216"/>
    </location>
    <ligand>
        <name>Ca(2+)</name>
        <dbReference type="ChEBI" id="CHEBI:29108"/>
        <label>1</label>
    </ligand>
</feature>
<feature type="binding site" evidence="2">
    <location>
        <position position="228"/>
    </location>
    <ligand>
        <name>Ca(2+)</name>
        <dbReference type="ChEBI" id="CHEBI:29108"/>
        <label>2</label>
    </ligand>
</feature>
<feature type="binding site" evidence="2">
    <location>
        <position position="229"/>
    </location>
    <ligand>
        <name>Ca(2+)</name>
        <dbReference type="ChEBI" id="CHEBI:29108"/>
        <label>2</label>
    </ligand>
</feature>
<feature type="binding site" evidence="2">
    <location>
        <position position="231"/>
    </location>
    <ligand>
        <name>Ca(2+)</name>
        <dbReference type="ChEBI" id="CHEBI:29108"/>
        <label>2</label>
    </ligand>
</feature>
<feature type="binding site" evidence="2">
    <location>
        <position position="301"/>
    </location>
    <ligand>
        <name>Ca(2+)</name>
        <dbReference type="ChEBI" id="CHEBI:29108"/>
        <label>2</label>
    </ligand>
</feature>
<feature type="glycosylation site" description="N-linked (GlcNAc...) asparagine; by host" evidence="1">
    <location>
        <position position="69"/>
    </location>
</feature>
<feature type="disulfide bond" evidence="2">
    <location>
        <begin position="82"/>
        <end position="135"/>
    </location>
</feature>
<feature type="disulfide bond" evidence="2">
    <location>
        <begin position="165"/>
        <end position="249"/>
    </location>
</feature>
<feature type="disulfide bond" evidence="2">
    <location>
        <begin position="191"/>
        <end position="244"/>
    </location>
</feature>
<feature type="disulfide bond" evidence="2">
    <location>
        <begin position="196"/>
        <end position="207"/>
    </location>
</feature>
<feature type="splice variant" id="VSP_038637" description="In isoform 2." evidence="3">
    <location>
        <begin position="1"/>
        <end position="29"/>
    </location>
</feature>
<protein>
    <recommendedName>
        <fullName evidence="2">Outer capsid glycoprotein VP7</fullName>
    </recommendedName>
</protein>
<accession>P09365</accession>
<evidence type="ECO:0000255" key="1"/>
<evidence type="ECO:0000255" key="2">
    <source>
        <dbReference type="HAMAP-Rule" id="MF_04131"/>
    </source>
</evidence>
<evidence type="ECO:0000305" key="3"/>
<comment type="function">
    <text evidence="2">Calcium-binding protein that interacts with rotavirus cell receptors once the initial attachment by VP4 has been achieved. Rotavirus attachment and entry into the host cell probably involves multiple sequential contacts between the outer capsid proteins VP4 and VP7, and the cell receptors. Following entry into the host cell, low intracellular or intravesicular Ca(2+) concentration probably causes the calcium-stabilized VP7 trimers to dissociate from the virion. This step is probably necessary for the membrane-disrupting entry step and the release of VP4, which is locked onto the virion by VP7.</text>
</comment>
<comment type="subunit">
    <text evidence="2">Homotrimer; disulfide-linked. 2 Ca(2+) ions bound at each subunit interface in the trimer hold the trimer together. Interacts with the intermediate capsid protein VP6. Interacts with the outer capsid protein VP5*.</text>
</comment>
<comment type="subcellular location">
    <subcellularLocation>
        <location evidence="2">Virion</location>
    </subcellularLocation>
    <subcellularLocation>
        <location evidence="2">Host endoplasmic reticulum lumen</location>
    </subcellularLocation>
    <text evidence="2">The outer layer contains 780 copies of VP7, grouped as 260 trimers. Immature double-layered particles assembled in the cytoplasm bud across the membrane of the endoplasmic reticulum, acquiring during this process a transient lipid membrane that is modified with the ER resident viral glycoproteins NSP4 and VP7; these enveloped particles also contain VP4. As the particles move towards the interior of the ER cisternae, the transient lipid membrane and the non-structural protein NSP4 are lost, while the virus surface proteins VP4 and VP7 rearrange to form the outermost virus protein layer, yielding mature infectious triple-layered particles.</text>
</comment>
<comment type="alternative products">
    <event type="alternative initiation"/>
    <isoform>
        <id>P09365-1</id>
        <name>1</name>
        <sequence type="displayed"/>
    </isoform>
    <isoform>
        <id>P09365-2</id>
        <name>2</name>
        <sequence type="described" ref="VSP_038637"/>
    </isoform>
</comment>
<comment type="PTM">
    <text evidence="2">N-glycosylated.</text>
</comment>
<comment type="PTM">
    <text evidence="2">The N-terminus is blocked possibly by pyroglutamic acid.</text>
</comment>
<comment type="miscellaneous">
    <text evidence="2">Some rotavirus strains are neuraminidase-sensitive and require sialic acid to attach to the cell surface. Some rotavirus strains are integrin-dependent. Some rotavirus strains depend on ganglioside for their entry into the host cell. Hsp70 also seems to be involved in the entry of some strains.</text>
</comment>
<comment type="miscellaneous">
    <text evidence="2">In group A rotaviruses, VP7 defines the G serotype.</text>
</comment>
<comment type="miscellaneous">
    <molecule>Isoform 2</molecule>
    <text evidence="3">Produced by alternative initiation at Met-30 of isoform 1.</text>
</comment>
<comment type="similarity">
    <text evidence="2">Belongs to the rotavirus VP7 family.</text>
</comment>
<organismHost>
    <name type="scientific">Sus scrofa</name>
    <name type="common">Pig</name>
    <dbReference type="NCBI Taxonomy" id="9823"/>
</organismHost>
<organism>
    <name type="scientific">Rotavirus A (strain RVA/Pig/United States/Gottfried/1983/G4P2B[6])</name>
    <name type="common">RV-A</name>
    <dbReference type="NCBI Taxonomy" id="10917"/>
    <lineage>
        <taxon>Viruses</taxon>
        <taxon>Riboviria</taxon>
        <taxon>Orthornavirae</taxon>
        <taxon>Duplornaviricota</taxon>
        <taxon>Resentoviricetes</taxon>
        <taxon>Reovirales</taxon>
        <taxon>Sedoreoviridae</taxon>
        <taxon>Rotavirus</taxon>
        <taxon>Rotavirus A</taxon>
    </lineage>
</organism>
<dbReference type="EMBL" id="X06759">
    <property type="protein sequence ID" value="CAA29933.1"/>
    <property type="molecule type" value="Genomic_RNA"/>
</dbReference>
<dbReference type="EMBL" id="X06386">
    <property type="protein sequence ID" value="CAA29683.1"/>
    <property type="molecule type" value="Genomic_RNA"/>
</dbReference>
<dbReference type="PIR" id="S01748">
    <property type="entry name" value="VGXR4G"/>
</dbReference>
<dbReference type="SMR" id="P09365"/>
<dbReference type="GO" id="GO:0044166">
    <property type="term" value="C:host cell endoplasmic reticulum lumen"/>
    <property type="evidence" value="ECO:0007669"/>
    <property type="project" value="UniProtKB-SubCell"/>
</dbReference>
<dbReference type="GO" id="GO:0039621">
    <property type="term" value="C:T=13 icosahedral viral capsid"/>
    <property type="evidence" value="ECO:0007669"/>
    <property type="project" value="UniProtKB-UniRule"/>
</dbReference>
<dbReference type="GO" id="GO:0039624">
    <property type="term" value="C:viral outer capsid"/>
    <property type="evidence" value="ECO:0007669"/>
    <property type="project" value="UniProtKB-UniRule"/>
</dbReference>
<dbReference type="GO" id="GO:0046872">
    <property type="term" value="F:metal ion binding"/>
    <property type="evidence" value="ECO:0007669"/>
    <property type="project" value="UniProtKB-KW"/>
</dbReference>
<dbReference type="Gene3D" id="3.40.50.11130">
    <property type="entry name" value="Glycoprotein VP7, domain 1"/>
    <property type="match status" value="1"/>
</dbReference>
<dbReference type="Gene3D" id="2.60.120.800">
    <property type="entry name" value="Rotavirus outer-layer protein VP7, domain 2"/>
    <property type="match status" value="1"/>
</dbReference>
<dbReference type="HAMAP" id="MF_04130">
    <property type="entry name" value="Rota_VP7"/>
    <property type="match status" value="1"/>
</dbReference>
<dbReference type="HAMAP" id="MF_04131">
    <property type="entry name" value="Rota_VP7_A"/>
    <property type="match status" value="1"/>
</dbReference>
<dbReference type="InterPro" id="IPR001963">
    <property type="entry name" value="VP7"/>
</dbReference>
<dbReference type="InterPro" id="IPR042207">
    <property type="entry name" value="VP7_1"/>
</dbReference>
<dbReference type="InterPro" id="IPR042210">
    <property type="entry name" value="VP7_2"/>
</dbReference>
<dbReference type="Pfam" id="PF00434">
    <property type="entry name" value="VP7"/>
    <property type="match status" value="1"/>
</dbReference>
<proteinExistence type="inferred from homology"/>
<sequence length="326" mass="37076">MYGIEYTTVLLYLISFVLMSYILKTITKMMDYIIYRITFIIVVLSVLSNAQNYGINLPITGSMDTAYANSTQDNNFLSSTLCLYYPSEAPTQINDNEWKDTLSQLFLTKGWPTGSVYFNEYSNVLEFSIDPKLHCDYNIVLIRFASGEELDISELADLILNEWLCNPMDITLYYYQQTGEANKWISMGSSCTVKVCPLNTQTLGIGCQTTNTATFETVADSEKLAIVDVVDSVNHKLDVTSTTCTIRNCNKLGPRENVAIIQVGGSNILDITANPTTSPQTERMMRVNWKKWWQVFYTVVDYINQIVQVMSKRSRSLDSSSFYYRV</sequence>
<keyword id="KW-0024">Alternative initiation</keyword>
<keyword id="KW-0106">Calcium</keyword>
<keyword id="KW-0167">Capsid protein</keyword>
<keyword id="KW-1015">Disulfide bond</keyword>
<keyword id="KW-0325">Glycoprotein</keyword>
<keyword id="KW-1038">Host endoplasmic reticulum</keyword>
<keyword id="KW-0945">Host-virus interaction</keyword>
<keyword id="KW-0479">Metal-binding</keyword>
<keyword id="KW-1152">Outer capsid protein</keyword>
<keyword id="KW-0732">Signal</keyword>
<keyword id="KW-1146">T=13 icosahedral capsid protein</keyword>
<keyword id="KW-0946">Virion</keyword>